<dbReference type="EMBL" id="FM954972">
    <property type="protein sequence ID" value="CAV17408.1"/>
    <property type="molecule type" value="Genomic_DNA"/>
</dbReference>
<dbReference type="SMR" id="B7VIH1"/>
<dbReference type="STRING" id="575788.VS_0400"/>
<dbReference type="KEGG" id="vsp:VS_0400"/>
<dbReference type="eggNOG" id="COG0828">
    <property type="taxonomic scope" value="Bacteria"/>
</dbReference>
<dbReference type="HOGENOM" id="CLU_159258_1_0_6"/>
<dbReference type="Proteomes" id="UP000009100">
    <property type="component" value="Chromosome 1"/>
</dbReference>
<dbReference type="GO" id="GO:1990904">
    <property type="term" value="C:ribonucleoprotein complex"/>
    <property type="evidence" value="ECO:0007669"/>
    <property type="project" value="UniProtKB-KW"/>
</dbReference>
<dbReference type="GO" id="GO:0005840">
    <property type="term" value="C:ribosome"/>
    <property type="evidence" value="ECO:0007669"/>
    <property type="project" value="UniProtKB-KW"/>
</dbReference>
<dbReference type="GO" id="GO:0003735">
    <property type="term" value="F:structural constituent of ribosome"/>
    <property type="evidence" value="ECO:0007669"/>
    <property type="project" value="InterPro"/>
</dbReference>
<dbReference type="GO" id="GO:0006412">
    <property type="term" value="P:translation"/>
    <property type="evidence" value="ECO:0007669"/>
    <property type="project" value="UniProtKB-UniRule"/>
</dbReference>
<dbReference type="FunFam" id="1.20.5.1150:FF:000001">
    <property type="entry name" value="30S ribosomal protein S21"/>
    <property type="match status" value="1"/>
</dbReference>
<dbReference type="Gene3D" id="1.20.5.1150">
    <property type="entry name" value="Ribosomal protein S8"/>
    <property type="match status" value="1"/>
</dbReference>
<dbReference type="HAMAP" id="MF_00358">
    <property type="entry name" value="Ribosomal_bS21"/>
    <property type="match status" value="1"/>
</dbReference>
<dbReference type="InterPro" id="IPR001911">
    <property type="entry name" value="Ribosomal_bS21"/>
</dbReference>
<dbReference type="InterPro" id="IPR018278">
    <property type="entry name" value="Ribosomal_bS21_CS"/>
</dbReference>
<dbReference type="InterPro" id="IPR038380">
    <property type="entry name" value="Ribosomal_bS21_sf"/>
</dbReference>
<dbReference type="NCBIfam" id="TIGR00030">
    <property type="entry name" value="S21p"/>
    <property type="match status" value="1"/>
</dbReference>
<dbReference type="PANTHER" id="PTHR21109">
    <property type="entry name" value="MITOCHONDRIAL 28S RIBOSOMAL PROTEIN S21"/>
    <property type="match status" value="1"/>
</dbReference>
<dbReference type="PANTHER" id="PTHR21109:SF22">
    <property type="entry name" value="SMALL RIBOSOMAL SUBUNIT PROTEIN BS21"/>
    <property type="match status" value="1"/>
</dbReference>
<dbReference type="Pfam" id="PF01165">
    <property type="entry name" value="Ribosomal_S21"/>
    <property type="match status" value="1"/>
</dbReference>
<dbReference type="PRINTS" id="PR00976">
    <property type="entry name" value="RIBOSOMALS21"/>
</dbReference>
<dbReference type="PROSITE" id="PS01181">
    <property type="entry name" value="RIBOSOMAL_S21"/>
    <property type="match status" value="1"/>
</dbReference>
<proteinExistence type="inferred from homology"/>
<name>RS21_VIBA3</name>
<protein>
    <recommendedName>
        <fullName evidence="1">Small ribosomal subunit protein bS21</fullName>
    </recommendedName>
    <alternativeName>
        <fullName evidence="3">30S ribosomal protein S21</fullName>
    </alternativeName>
</protein>
<organism>
    <name type="scientific">Vibrio atlanticus (strain LGP32)</name>
    <name type="common">Vibrio splendidus (strain Mel32)</name>
    <dbReference type="NCBI Taxonomy" id="575788"/>
    <lineage>
        <taxon>Bacteria</taxon>
        <taxon>Pseudomonadati</taxon>
        <taxon>Pseudomonadota</taxon>
        <taxon>Gammaproteobacteria</taxon>
        <taxon>Vibrionales</taxon>
        <taxon>Vibrionaceae</taxon>
        <taxon>Vibrio</taxon>
    </lineage>
</organism>
<accession>B7VIH1</accession>
<comment type="similarity">
    <text evidence="1">Belongs to the bacterial ribosomal protein bS21 family.</text>
</comment>
<sequence length="71" mass="8501">MPIVKVRENEPFDVALRRFKRSCEKAGILSEVRRREHYEKPTTVRKRAKAAAQKRHAKKLARENARRVRLY</sequence>
<feature type="chain" id="PRO_1000133497" description="Small ribosomal subunit protein bS21">
    <location>
        <begin position="1"/>
        <end position="71"/>
    </location>
</feature>
<feature type="region of interest" description="Disordered" evidence="2">
    <location>
        <begin position="39"/>
        <end position="71"/>
    </location>
</feature>
<feature type="compositionally biased region" description="Basic residues" evidence="2">
    <location>
        <begin position="43"/>
        <end position="59"/>
    </location>
</feature>
<feature type="compositionally biased region" description="Basic and acidic residues" evidence="2">
    <location>
        <begin position="60"/>
        <end position="71"/>
    </location>
</feature>
<reference key="1">
    <citation type="submission" date="2009-02" db="EMBL/GenBank/DDBJ databases">
        <title>Vibrio splendidus str. LGP32 complete genome.</title>
        <authorList>
            <person name="Mazel D."/>
            <person name="Le Roux F."/>
        </authorList>
    </citation>
    <scope>NUCLEOTIDE SEQUENCE [LARGE SCALE GENOMIC DNA]</scope>
    <source>
        <strain>LGP32</strain>
    </source>
</reference>
<evidence type="ECO:0000255" key="1">
    <source>
        <dbReference type="HAMAP-Rule" id="MF_00358"/>
    </source>
</evidence>
<evidence type="ECO:0000256" key="2">
    <source>
        <dbReference type="SAM" id="MobiDB-lite"/>
    </source>
</evidence>
<evidence type="ECO:0000305" key="3"/>
<keyword id="KW-0687">Ribonucleoprotein</keyword>
<keyword id="KW-0689">Ribosomal protein</keyword>
<gene>
    <name evidence="1" type="primary">rpsU</name>
    <name type="ordered locus">VS_0400</name>
</gene>